<dbReference type="EC" id="2.4.2.10" evidence="1"/>
<dbReference type="EMBL" id="BA000037">
    <property type="protein sequence ID" value="BAC93044.1"/>
    <property type="molecule type" value="Genomic_DNA"/>
</dbReference>
<dbReference type="RefSeq" id="WP_011149258.1">
    <property type="nucleotide sequence ID" value="NC_005139.1"/>
</dbReference>
<dbReference type="SMR" id="Q7MPT2"/>
<dbReference type="STRING" id="672.VV93_v1c02720"/>
<dbReference type="KEGG" id="vvy:VV0280"/>
<dbReference type="PATRIC" id="fig|196600.6.peg.315"/>
<dbReference type="eggNOG" id="COG0461">
    <property type="taxonomic scope" value="Bacteria"/>
</dbReference>
<dbReference type="HOGENOM" id="CLU_074878_0_1_6"/>
<dbReference type="UniPathway" id="UPA00070">
    <property type="reaction ID" value="UER00119"/>
</dbReference>
<dbReference type="Proteomes" id="UP000002675">
    <property type="component" value="Chromosome I"/>
</dbReference>
<dbReference type="GO" id="GO:0005737">
    <property type="term" value="C:cytoplasm"/>
    <property type="evidence" value="ECO:0007669"/>
    <property type="project" value="TreeGrafter"/>
</dbReference>
<dbReference type="GO" id="GO:0000287">
    <property type="term" value="F:magnesium ion binding"/>
    <property type="evidence" value="ECO:0007669"/>
    <property type="project" value="UniProtKB-UniRule"/>
</dbReference>
<dbReference type="GO" id="GO:0004588">
    <property type="term" value="F:orotate phosphoribosyltransferase activity"/>
    <property type="evidence" value="ECO:0007669"/>
    <property type="project" value="UniProtKB-UniRule"/>
</dbReference>
<dbReference type="GO" id="GO:0006207">
    <property type="term" value="P:'de novo' pyrimidine nucleobase biosynthetic process"/>
    <property type="evidence" value="ECO:0007669"/>
    <property type="project" value="TreeGrafter"/>
</dbReference>
<dbReference type="GO" id="GO:0044205">
    <property type="term" value="P:'de novo' UMP biosynthetic process"/>
    <property type="evidence" value="ECO:0007669"/>
    <property type="project" value="UniProtKB-UniRule"/>
</dbReference>
<dbReference type="GO" id="GO:0046132">
    <property type="term" value="P:pyrimidine ribonucleoside biosynthetic process"/>
    <property type="evidence" value="ECO:0007669"/>
    <property type="project" value="TreeGrafter"/>
</dbReference>
<dbReference type="CDD" id="cd06223">
    <property type="entry name" value="PRTases_typeI"/>
    <property type="match status" value="1"/>
</dbReference>
<dbReference type="FunFam" id="3.40.50.2020:FF:000008">
    <property type="entry name" value="Orotate phosphoribosyltransferase"/>
    <property type="match status" value="1"/>
</dbReference>
<dbReference type="Gene3D" id="3.40.50.2020">
    <property type="match status" value="1"/>
</dbReference>
<dbReference type="HAMAP" id="MF_01208">
    <property type="entry name" value="PyrE"/>
    <property type="match status" value="1"/>
</dbReference>
<dbReference type="InterPro" id="IPR023031">
    <property type="entry name" value="OPRT"/>
</dbReference>
<dbReference type="InterPro" id="IPR004467">
    <property type="entry name" value="Or_phspho_trans_dom"/>
</dbReference>
<dbReference type="InterPro" id="IPR000836">
    <property type="entry name" value="PRibTrfase_dom"/>
</dbReference>
<dbReference type="InterPro" id="IPR029057">
    <property type="entry name" value="PRTase-like"/>
</dbReference>
<dbReference type="NCBIfam" id="TIGR00336">
    <property type="entry name" value="pyrE"/>
    <property type="match status" value="1"/>
</dbReference>
<dbReference type="PANTHER" id="PTHR46683">
    <property type="entry name" value="OROTATE PHOSPHORIBOSYLTRANSFERASE 1-RELATED"/>
    <property type="match status" value="1"/>
</dbReference>
<dbReference type="PANTHER" id="PTHR46683:SF1">
    <property type="entry name" value="OROTATE PHOSPHORIBOSYLTRANSFERASE 1-RELATED"/>
    <property type="match status" value="1"/>
</dbReference>
<dbReference type="Pfam" id="PF00156">
    <property type="entry name" value="Pribosyltran"/>
    <property type="match status" value="1"/>
</dbReference>
<dbReference type="SUPFAM" id="SSF53271">
    <property type="entry name" value="PRTase-like"/>
    <property type="match status" value="1"/>
</dbReference>
<dbReference type="PROSITE" id="PS00103">
    <property type="entry name" value="PUR_PYR_PR_TRANSFER"/>
    <property type="match status" value="1"/>
</dbReference>
<proteinExistence type="inferred from homology"/>
<accession>Q7MPT2</accession>
<evidence type="ECO:0000255" key="1">
    <source>
        <dbReference type="HAMAP-Rule" id="MF_01208"/>
    </source>
</evidence>
<protein>
    <recommendedName>
        <fullName evidence="1">Orotate phosphoribosyltransferase</fullName>
        <shortName evidence="1">OPRT</shortName>
        <shortName evidence="1">OPRTase</shortName>
        <ecNumber evidence="1">2.4.2.10</ecNumber>
    </recommendedName>
</protein>
<comment type="function">
    <text evidence="1">Catalyzes the transfer of a ribosyl phosphate group from 5-phosphoribose 1-diphosphate to orotate, leading to the formation of orotidine monophosphate (OMP).</text>
</comment>
<comment type="catalytic activity">
    <reaction evidence="1">
        <text>orotidine 5'-phosphate + diphosphate = orotate + 5-phospho-alpha-D-ribose 1-diphosphate</text>
        <dbReference type="Rhea" id="RHEA:10380"/>
        <dbReference type="ChEBI" id="CHEBI:30839"/>
        <dbReference type="ChEBI" id="CHEBI:33019"/>
        <dbReference type="ChEBI" id="CHEBI:57538"/>
        <dbReference type="ChEBI" id="CHEBI:58017"/>
        <dbReference type="EC" id="2.4.2.10"/>
    </reaction>
</comment>
<comment type="cofactor">
    <cofactor evidence="1">
        <name>Mg(2+)</name>
        <dbReference type="ChEBI" id="CHEBI:18420"/>
    </cofactor>
</comment>
<comment type="pathway">
    <text evidence="1">Pyrimidine metabolism; UMP biosynthesis via de novo pathway; UMP from orotate: step 1/2.</text>
</comment>
<comment type="subunit">
    <text evidence="1">Homodimer.</text>
</comment>
<comment type="similarity">
    <text evidence="1">Belongs to the purine/pyrimidine phosphoribosyltransferase family. PyrE subfamily.</text>
</comment>
<sequence>MKAYQREFIEFALEKQVLKFGEFTLKSGRKSPYFFNAGLFNTGRDLARLGRFYAAALADSGIEFDVLFGPAYKGIPIATTTAVALADHHDIDTPYCFNRKEAKDHGEGGNLVGSALEGRIMLVDDVITAGTAIRESMEIIQANGADLAGVLVAIDRQEKGKGELSAIQEVERDFACAVISIVSLSDLITFLEEKGDTAEHLDAVKAYRAQYGI</sequence>
<feature type="chain" id="PRO_0000110768" description="Orotate phosphoribosyltransferase">
    <location>
        <begin position="1"/>
        <end position="213"/>
    </location>
</feature>
<feature type="binding site" description="in other chain" evidence="1">
    <location>
        <position position="26"/>
    </location>
    <ligand>
        <name>5-phospho-alpha-D-ribose 1-diphosphate</name>
        <dbReference type="ChEBI" id="CHEBI:58017"/>
        <note>ligand shared between dimeric partners</note>
    </ligand>
</feature>
<feature type="binding site" evidence="1">
    <location>
        <begin position="34"/>
        <end position="35"/>
    </location>
    <ligand>
        <name>orotate</name>
        <dbReference type="ChEBI" id="CHEBI:30839"/>
    </ligand>
</feature>
<feature type="binding site" description="in other chain" evidence="1">
    <location>
        <begin position="72"/>
        <end position="73"/>
    </location>
    <ligand>
        <name>5-phospho-alpha-D-ribose 1-diphosphate</name>
        <dbReference type="ChEBI" id="CHEBI:58017"/>
        <note>ligand shared between dimeric partners</note>
    </ligand>
</feature>
<feature type="binding site" evidence="1">
    <location>
        <position position="99"/>
    </location>
    <ligand>
        <name>5-phospho-alpha-D-ribose 1-diphosphate</name>
        <dbReference type="ChEBI" id="CHEBI:58017"/>
        <note>ligand shared between dimeric partners</note>
    </ligand>
</feature>
<feature type="binding site" description="in other chain" evidence="1">
    <location>
        <position position="100"/>
    </location>
    <ligand>
        <name>5-phospho-alpha-D-ribose 1-diphosphate</name>
        <dbReference type="ChEBI" id="CHEBI:58017"/>
        <note>ligand shared between dimeric partners</note>
    </ligand>
</feature>
<feature type="binding site" evidence="1">
    <location>
        <position position="103"/>
    </location>
    <ligand>
        <name>5-phospho-alpha-D-ribose 1-diphosphate</name>
        <dbReference type="ChEBI" id="CHEBI:58017"/>
        <note>ligand shared between dimeric partners</note>
    </ligand>
</feature>
<feature type="binding site" evidence="1">
    <location>
        <position position="105"/>
    </location>
    <ligand>
        <name>5-phospho-alpha-D-ribose 1-diphosphate</name>
        <dbReference type="ChEBI" id="CHEBI:58017"/>
        <note>ligand shared between dimeric partners</note>
    </ligand>
</feature>
<feature type="binding site" description="in other chain" evidence="1">
    <location>
        <begin position="124"/>
        <end position="132"/>
    </location>
    <ligand>
        <name>5-phospho-alpha-D-ribose 1-diphosphate</name>
        <dbReference type="ChEBI" id="CHEBI:58017"/>
        <note>ligand shared between dimeric partners</note>
    </ligand>
</feature>
<feature type="binding site" evidence="1">
    <location>
        <position position="128"/>
    </location>
    <ligand>
        <name>orotate</name>
        <dbReference type="ChEBI" id="CHEBI:30839"/>
    </ligand>
</feature>
<feature type="binding site" evidence="1">
    <location>
        <position position="156"/>
    </location>
    <ligand>
        <name>orotate</name>
        <dbReference type="ChEBI" id="CHEBI:30839"/>
    </ligand>
</feature>
<gene>
    <name evidence="1" type="primary">pyrE</name>
    <name type="ordered locus">VV0280</name>
</gene>
<keyword id="KW-0328">Glycosyltransferase</keyword>
<keyword id="KW-0460">Magnesium</keyword>
<keyword id="KW-0665">Pyrimidine biosynthesis</keyword>
<keyword id="KW-0808">Transferase</keyword>
<name>PYRE_VIBVY</name>
<reference key="1">
    <citation type="journal article" date="2003" name="Genome Res.">
        <title>Comparative genome analysis of Vibrio vulnificus, a marine pathogen.</title>
        <authorList>
            <person name="Chen C.-Y."/>
            <person name="Wu K.-M."/>
            <person name="Chang Y.-C."/>
            <person name="Chang C.-H."/>
            <person name="Tsai H.-C."/>
            <person name="Liao T.-L."/>
            <person name="Liu Y.-M."/>
            <person name="Chen H.-J."/>
            <person name="Shen A.B.-T."/>
            <person name="Li J.-C."/>
            <person name="Su T.-L."/>
            <person name="Shao C.-P."/>
            <person name="Lee C.-T."/>
            <person name="Hor L.-I."/>
            <person name="Tsai S.-F."/>
        </authorList>
    </citation>
    <scope>NUCLEOTIDE SEQUENCE [LARGE SCALE GENOMIC DNA]</scope>
    <source>
        <strain>YJ016</strain>
    </source>
</reference>
<organism>
    <name type="scientific">Vibrio vulnificus (strain YJ016)</name>
    <dbReference type="NCBI Taxonomy" id="196600"/>
    <lineage>
        <taxon>Bacteria</taxon>
        <taxon>Pseudomonadati</taxon>
        <taxon>Pseudomonadota</taxon>
        <taxon>Gammaproteobacteria</taxon>
        <taxon>Vibrionales</taxon>
        <taxon>Vibrionaceae</taxon>
        <taxon>Vibrio</taxon>
    </lineage>
</organism>